<gene>
    <name evidence="9" type="primary">yfiR</name>
    <name evidence="11" type="ordered locus">PA1121</name>
</gene>
<dbReference type="EMBL" id="AE004091">
    <property type="protein sequence ID" value="AAG04510.1"/>
    <property type="molecule type" value="Genomic_DNA"/>
</dbReference>
<dbReference type="PIR" id="E83505">
    <property type="entry name" value="E83505"/>
</dbReference>
<dbReference type="RefSeq" id="NP_249812.1">
    <property type="nucleotide sequence ID" value="NC_002516.2"/>
</dbReference>
<dbReference type="RefSeq" id="WP_003115307.1">
    <property type="nucleotide sequence ID" value="NZ_QZGE01000006.1"/>
</dbReference>
<dbReference type="PDB" id="4XJY">
    <property type="method" value="X-ray"/>
    <property type="resolution" value="1.80 A"/>
    <property type="chains" value="A/B/C/D=36-190"/>
</dbReference>
<dbReference type="PDB" id="4YN7">
    <property type="method" value="X-ray"/>
    <property type="resolution" value="2.60 A"/>
    <property type="chains" value="A/B=35-190"/>
</dbReference>
<dbReference type="PDB" id="4YN9">
    <property type="method" value="X-ray"/>
    <property type="resolution" value="2.45 A"/>
    <property type="chains" value="A/B=35-190"/>
</dbReference>
<dbReference type="PDB" id="4YNA">
    <property type="method" value="X-ray"/>
    <property type="resolution" value="3.20 A"/>
    <property type="chains" value="A/B/C/D=35-190"/>
</dbReference>
<dbReference type="PDB" id="4ZHU">
    <property type="method" value="X-ray"/>
    <property type="resolution" value="2.40 A"/>
    <property type="chains" value="A/B=1-190"/>
</dbReference>
<dbReference type="PDB" id="4ZHY">
    <property type="method" value="X-ray"/>
    <property type="resolution" value="1.97 A"/>
    <property type="chains" value="A=1-190"/>
</dbReference>
<dbReference type="PDB" id="5EB1">
    <property type="method" value="X-ray"/>
    <property type="resolution" value="1.80 A"/>
    <property type="chains" value="A/C=35-190"/>
</dbReference>
<dbReference type="PDB" id="5EB2">
    <property type="method" value="X-ray"/>
    <property type="resolution" value="2.71 A"/>
    <property type="chains" value="A/B=35-190"/>
</dbReference>
<dbReference type="PDB" id="5EB3">
    <property type="method" value="X-ray"/>
    <property type="resolution" value="2.40 A"/>
    <property type="chains" value="A/B=35-190"/>
</dbReference>
<dbReference type="PDB" id="5Y61">
    <property type="method" value="X-ray"/>
    <property type="resolution" value="2.99 A"/>
    <property type="chains" value="A/C=35-190"/>
</dbReference>
<dbReference type="PDB" id="5Y62">
    <property type="method" value="X-ray"/>
    <property type="resolution" value="3.00 A"/>
    <property type="chains" value="A/B=35-190"/>
</dbReference>
<dbReference type="PDB" id="6IKK">
    <property type="method" value="X-ray"/>
    <property type="resolution" value="2.19 A"/>
    <property type="chains" value="B/D=1-190"/>
</dbReference>
<dbReference type="PDBsum" id="4XJY"/>
<dbReference type="PDBsum" id="4YN7"/>
<dbReference type="PDBsum" id="4YN9"/>
<dbReference type="PDBsum" id="4YNA"/>
<dbReference type="PDBsum" id="4ZHU"/>
<dbReference type="PDBsum" id="4ZHY"/>
<dbReference type="PDBsum" id="5EB1"/>
<dbReference type="PDBsum" id="5EB2"/>
<dbReference type="PDBsum" id="5EB3"/>
<dbReference type="PDBsum" id="5Y61"/>
<dbReference type="PDBsum" id="5Y62"/>
<dbReference type="PDBsum" id="6IKK"/>
<dbReference type="SMR" id="Q9I4L4"/>
<dbReference type="FunCoup" id="Q9I4L4">
    <property type="interactions" value="54"/>
</dbReference>
<dbReference type="STRING" id="208964.PA1121"/>
<dbReference type="PaxDb" id="208964-PA1121"/>
<dbReference type="DNASU" id="877671"/>
<dbReference type="GeneID" id="877671"/>
<dbReference type="KEGG" id="pae:PA1121"/>
<dbReference type="PATRIC" id="fig|208964.12.peg.1163"/>
<dbReference type="PseudoCAP" id="PA1121"/>
<dbReference type="HOGENOM" id="CLU_102469_0_0_6"/>
<dbReference type="InParanoid" id="Q9I4L4"/>
<dbReference type="OrthoDB" id="7355447at2"/>
<dbReference type="PhylomeDB" id="Q9I4L4"/>
<dbReference type="BioCyc" id="PAER208964:G1FZ6-1147-MONOMER"/>
<dbReference type="EvolutionaryTrace" id="Q9I4L4"/>
<dbReference type="Proteomes" id="UP000002438">
    <property type="component" value="Chromosome"/>
</dbReference>
<dbReference type="GO" id="GO:0042597">
    <property type="term" value="C:periplasmic space"/>
    <property type="evidence" value="ECO:0007669"/>
    <property type="project" value="UniProtKB-SubCell"/>
</dbReference>
<dbReference type="InterPro" id="IPR025293">
    <property type="entry name" value="YfiR/HmsC-like"/>
</dbReference>
<dbReference type="Pfam" id="PF13689">
    <property type="entry name" value="DUF4154"/>
    <property type="match status" value="1"/>
</dbReference>
<organism>
    <name type="scientific">Pseudomonas aeruginosa (strain ATCC 15692 / DSM 22644 / CIP 104116 / JCM 14847 / LMG 12228 / 1C / PRS 101 / PAO1)</name>
    <dbReference type="NCBI Taxonomy" id="208964"/>
    <lineage>
        <taxon>Bacteria</taxon>
        <taxon>Pseudomonadati</taxon>
        <taxon>Pseudomonadota</taxon>
        <taxon>Gammaproteobacteria</taxon>
        <taxon>Pseudomonadales</taxon>
        <taxon>Pseudomonadaceae</taxon>
        <taxon>Pseudomonas</taxon>
    </lineage>
</organism>
<name>YFIR_PSEAE</name>
<evidence type="ECO:0000269" key="1">
    <source>
    </source>
</evidence>
<evidence type="ECO:0000269" key="2">
    <source>
    </source>
</evidence>
<evidence type="ECO:0000269" key="3">
    <source>
    </source>
</evidence>
<evidence type="ECO:0000269" key="4">
    <source>
    </source>
</evidence>
<evidence type="ECO:0000269" key="5">
    <source>
    </source>
</evidence>
<evidence type="ECO:0000269" key="6">
    <source>
    </source>
</evidence>
<evidence type="ECO:0000269" key="7">
    <source>
    </source>
</evidence>
<evidence type="ECO:0000269" key="8">
    <source ref="6"/>
</evidence>
<evidence type="ECO:0000303" key="9">
    <source>
    </source>
</evidence>
<evidence type="ECO:0000305" key="10"/>
<evidence type="ECO:0000312" key="11">
    <source>
        <dbReference type="EMBL" id="AAG04510.1"/>
    </source>
</evidence>
<evidence type="ECO:0007744" key="12">
    <source>
        <dbReference type="PDB" id="4XJY"/>
    </source>
</evidence>
<evidence type="ECO:0007744" key="13">
    <source>
        <dbReference type="PDB" id="4YN7"/>
    </source>
</evidence>
<evidence type="ECO:0007744" key="14">
    <source>
        <dbReference type="PDB" id="4YN9"/>
    </source>
</evidence>
<evidence type="ECO:0007744" key="15">
    <source>
        <dbReference type="PDB" id="4YNA"/>
    </source>
</evidence>
<evidence type="ECO:0007744" key="16">
    <source>
        <dbReference type="PDB" id="4ZHU"/>
    </source>
</evidence>
<evidence type="ECO:0007744" key="17">
    <source>
        <dbReference type="PDB" id="4ZHY"/>
    </source>
</evidence>
<evidence type="ECO:0007744" key="18">
    <source>
        <dbReference type="PDB" id="5EB1"/>
    </source>
</evidence>
<evidence type="ECO:0007744" key="19">
    <source>
        <dbReference type="PDB" id="5EB2"/>
    </source>
</evidence>
<evidence type="ECO:0007744" key="20">
    <source>
        <dbReference type="PDB" id="5EB3"/>
    </source>
</evidence>
<evidence type="ECO:0007744" key="21">
    <source>
        <dbReference type="PDB" id="5Y61"/>
    </source>
</evidence>
<evidence type="ECO:0007744" key="22">
    <source>
        <dbReference type="PDB" id="5Y62"/>
    </source>
</evidence>
<evidence type="ECO:0007744" key="23">
    <source>
        <dbReference type="PDB" id="6IKK"/>
    </source>
</evidence>
<evidence type="ECO:0007829" key="24">
    <source>
        <dbReference type="PDB" id="4XJY"/>
    </source>
</evidence>
<evidence type="ECO:0007829" key="25">
    <source>
        <dbReference type="PDB" id="5Y61"/>
    </source>
</evidence>
<evidence type="ECO:0007829" key="26">
    <source>
        <dbReference type="PDB" id="5Y62"/>
    </source>
</evidence>
<comment type="function">
    <text evidence="1 2">Negatively regulates the activity of the diguanylate cyclase TpbB/YfiN, leading to decreased c-di-GMP production (PubMed:20300602). Inhibits TpbB/YfiN allosterically, through a hydrophobic interaction between the C-terminus of YfiR and a conserved region of the periplasmic PAS domain of TpbB/YfiN (PubMed:22719254). Under reducing conditions, may also act as an YfiB-independent sensing device that is able to activate TpbB/YfiN in response to the redox status of the periplasm (PubMed:22719254).</text>
</comment>
<comment type="function">
    <text evidence="1 2">Part of the YfiB-TpbB-YfiR (or yfiBNR) system, encoding a tripartite signaling module that modulates intracellular c-di-GMP levels (PubMed:20300602, PubMed:22719254). The system is a key regulator of the small colony variant (SCV) phenotype, and plays an important role in biofilm formation and in vivo persistence (PubMed:20300602). The c-di-GMP produced by TpbB/YfiN stimulates the production of the Pel and Psl exopolysaccharides, which promotes surface attachment, generates an SCV phenotype and confers resistance against phagocytosis (PubMed:20300602).</text>
</comment>
<comment type="activity regulation">
    <text evidence="2 5 6">TpbB/YfiN repression is released through an YfiB-dependent sequestration of YfiR to the outer membrane (PubMed:22719254). Binds vitamin B6 (VB6) or L-Trp at the periphery of the dimer, and both VB6 and L-Trp are able to reduce biofilm formation induced by YfiB L43P mutant (PubMed:27113583). However, VB6 or L-Trp alone may have little effects in interrupting the YfiB-YfiR interaction (PubMed:27113583). GMP enhances the binding affinity between YfiB and YfiR (PubMed:28870806).</text>
</comment>
<comment type="subunit">
    <text evidence="2 3 4 5 6">Homodimer (PubMed:25849887, PubMed:26593397, PubMed:27113583). Interacts with TpbB/YfiN (PubMed:22719254). Interacts with YfiB (PubMed:26593397, PubMed:27113583, PubMed:28870806). The YfiB-YfiR complex is a 2:2 heterotetramer (PubMed:27113583).</text>
</comment>
<comment type="subcellular location">
    <subcellularLocation>
        <location evidence="1">Periplasm</location>
    </subcellularLocation>
    <text evidence="2">Shuttles between inner and outer membrane (PubMed:22719254). Localization to the outer membrane fraction is strictly YfiB-dependent (PubMed:22719254).</text>
</comment>
<comment type="PTM">
    <text evidence="3">Cys-71 and Cys-110 form a disulfide bond in the oxidized form but maintain their free form in the non-oxidized YfiR structure (PubMed:25849887). The Cys-145-Cys-152 disulfide bond is well formed in both structures (PubMed:25849887). The Cys145-Cys152 disulfide bond, but not Cys-71-Cys-110, plays an important role in maintaining the correct folding of the protein (PubMed:25849887).</text>
</comment>
<comment type="disruption phenotype">
    <text evidence="1">Deletion of the gene results in the generation of a small colony variant (SCV) morphology in PAO1 (PubMed:20300602). Mutant exhibits slow growth, reduced motility, a highly aggregative and wrinkled colony morphology, strong attachment to surfaces and strong, exopolysaccharide-dependent resistance to macrophage phagocytosis (PubMed:20300602). The deletion mutant, although suffering from a tremendous growth disadvantage, shows characteristic persistence behavior under antibiotic selection and during prolonged infection in vivo (PubMed:20300602).</text>
</comment>
<feature type="chain" id="PRO_0000458198" description="Negative regulator YfiR">
    <location>
        <begin position="1"/>
        <end position="190"/>
    </location>
</feature>
<feature type="binding site" evidence="6 22">
    <location>
        <position position="60"/>
    </location>
    <ligand>
        <name>GMP</name>
        <dbReference type="ChEBI" id="CHEBI:58115"/>
    </ligand>
</feature>
<feature type="binding site" evidence="6 22">
    <location>
        <position position="175"/>
    </location>
    <ligand>
        <name>GMP</name>
        <dbReference type="ChEBI" id="CHEBI:58115"/>
    </ligand>
</feature>
<feature type="binding site" evidence="6 22">
    <location>
        <position position="177"/>
    </location>
    <ligand>
        <name>GMP</name>
        <dbReference type="ChEBI" id="CHEBI:58115"/>
    </ligand>
</feature>
<feature type="disulfide bond" evidence="3 5 6 8 12 15 19 20 21 22">
    <location>
        <begin position="71"/>
        <end position="110"/>
    </location>
</feature>
<feature type="disulfide bond" evidence="3 4 5 6 7 8 12 13 14 15 16 17 18 19 20 21 22 23">
    <location>
        <begin position="145"/>
        <end position="152"/>
    </location>
</feature>
<feature type="mutagenesis site" description="Forms monomers." evidence="3">
    <original>R</original>
    <variation>A</variation>
    <location>
        <position position="98"/>
    </location>
</feature>
<feature type="mutagenesis site" description="Does not affect folding of the protein." evidence="3">
    <original>C</original>
    <variation>S</variation>
    <location>
        <position position="110"/>
    </location>
</feature>
<feature type="helix" evidence="24">
    <location>
        <begin position="41"/>
        <end position="56"/>
    </location>
</feature>
<feature type="strand" evidence="24">
    <location>
        <begin position="66"/>
        <end position="74"/>
    </location>
</feature>
<feature type="strand" evidence="24">
    <location>
        <begin position="76"/>
        <end position="78"/>
    </location>
</feature>
<feature type="helix" evidence="24">
    <location>
        <begin position="80"/>
        <end position="83"/>
    </location>
</feature>
<feature type="strand" evidence="24">
    <location>
        <begin position="93"/>
        <end position="99"/>
    </location>
</feature>
<feature type="helix" evidence="24">
    <location>
        <begin position="106"/>
        <end position="109"/>
    </location>
</feature>
<feature type="strand" evidence="24">
    <location>
        <begin position="111"/>
        <end position="115"/>
    </location>
</feature>
<feature type="helix" evidence="24">
    <location>
        <begin position="120"/>
        <end position="130"/>
    </location>
</feature>
<feature type="strand" evidence="24">
    <location>
        <begin position="136"/>
        <end position="140"/>
    </location>
</feature>
<feature type="helix" evidence="26">
    <location>
        <begin position="142"/>
        <end position="145"/>
    </location>
</feature>
<feature type="strand" evidence="24">
    <location>
        <begin position="146"/>
        <end position="148"/>
    </location>
</feature>
<feature type="strand" evidence="24">
    <location>
        <begin position="150"/>
        <end position="154"/>
    </location>
</feature>
<feature type="strand" evidence="24">
    <location>
        <begin position="156"/>
        <end position="159"/>
    </location>
</feature>
<feature type="strand" evidence="24">
    <location>
        <begin position="161"/>
        <end position="164"/>
    </location>
</feature>
<feature type="helix" evidence="24">
    <location>
        <begin position="166"/>
        <end position="171"/>
    </location>
</feature>
<feature type="strand" evidence="24">
    <location>
        <begin position="172"/>
        <end position="176"/>
    </location>
</feature>
<feature type="turn" evidence="24">
    <location>
        <begin position="178"/>
        <end position="180"/>
    </location>
</feature>
<feature type="helix" evidence="25">
    <location>
        <begin position="182"/>
        <end position="188"/>
    </location>
</feature>
<keyword id="KW-0002">3D-structure</keyword>
<keyword id="KW-1015">Disulfide bond</keyword>
<keyword id="KW-0574">Periplasm</keyword>
<keyword id="KW-1185">Reference proteome</keyword>
<proteinExistence type="evidence at protein level"/>
<reference key="1">
    <citation type="journal article" date="2000" name="Nature">
        <title>Complete genome sequence of Pseudomonas aeruginosa PAO1, an opportunistic pathogen.</title>
        <authorList>
            <person name="Stover C.K."/>
            <person name="Pham X.-Q.T."/>
            <person name="Erwin A.L."/>
            <person name="Mizoguchi S.D."/>
            <person name="Warrener P."/>
            <person name="Hickey M.J."/>
            <person name="Brinkman F.S.L."/>
            <person name="Hufnagle W.O."/>
            <person name="Kowalik D.J."/>
            <person name="Lagrou M."/>
            <person name="Garber R.L."/>
            <person name="Goltry L."/>
            <person name="Tolentino E."/>
            <person name="Westbrock-Wadman S."/>
            <person name="Yuan Y."/>
            <person name="Brody L.L."/>
            <person name="Coulter S.N."/>
            <person name="Folger K.R."/>
            <person name="Kas A."/>
            <person name="Larbig K."/>
            <person name="Lim R.M."/>
            <person name="Smith K.A."/>
            <person name="Spencer D.H."/>
            <person name="Wong G.K.-S."/>
            <person name="Wu Z."/>
            <person name="Paulsen I.T."/>
            <person name="Reizer J."/>
            <person name="Saier M.H. Jr."/>
            <person name="Hancock R.E.W."/>
            <person name="Lory S."/>
            <person name="Olson M.V."/>
        </authorList>
    </citation>
    <scope>NUCLEOTIDE SEQUENCE [LARGE SCALE GENOMIC DNA]</scope>
    <source>
        <strain>ATCC 15692 / DSM 22644 / CIP 104116 / JCM 14847 / LMG 12228 / 1C / PRS 101 / PAO1</strain>
    </source>
</reference>
<reference key="2">
    <citation type="journal article" date="2010" name="PLoS Pathog.">
        <title>YfiBNR mediates cyclic di-GMP dependent small colony variant formation and persistence in Pseudomonas aeruginosa.</title>
        <authorList>
            <person name="Malone J.G."/>
            <person name="Jaeger T."/>
            <person name="Spangler C."/>
            <person name="Ritz D."/>
            <person name="Spang A."/>
            <person name="Arrieumerlou C."/>
            <person name="Kaever V."/>
            <person name="Landmann R."/>
            <person name="Jenal U."/>
        </authorList>
    </citation>
    <scope>FUNCTION</scope>
    <scope>SUBCELLULAR LOCATION</scope>
    <scope>DISRUPTION PHENOTYPE</scope>
    <source>
        <strain>ATCC 15692 / DSM 22644 / CIP 104116 / JCM 14847 / LMG 12228 / 1C / PRS 101 / PAO1</strain>
    </source>
</reference>
<reference key="3">
    <citation type="journal article" date="2012" name="PLoS Pathog.">
        <title>The YfiBNR signal transduction mechanism reveals novel targets for the evolution of persistent Pseudomonas aeruginosa in cystic fibrosis airways.</title>
        <authorList>
            <person name="Malone J.G."/>
            <person name="Jaeger T."/>
            <person name="Manfredi P."/>
            <person name="Doetsch A."/>
            <person name="Blanka A."/>
            <person name="Bos R."/>
            <person name="Cornelis G.R."/>
            <person name="Haeussler S."/>
            <person name="Jenal U."/>
        </authorList>
    </citation>
    <scope>FUNCTION</scope>
    <scope>INTERACTION WITH TPBB/YFIN</scope>
    <scope>SUBCELLULAR LOCATION</scope>
    <scope>ACTIVITY REGULATION</scope>
    <source>
        <strain>ATCC 15692 / DSM 22644 / CIP 104116 / JCM 14847 / LMG 12228 / 1C / PRS 101 / PAO1</strain>
    </source>
</reference>
<reference evidence="13 14 15" key="4">
    <citation type="journal article" date="2015" name="Biochem. Biophys. Res. Commun.">
        <title>Crystal structures of YfiR from Pseudomonas aeruginosa in two redox states.</title>
        <authorList>
            <person name="Yang X."/>
            <person name="Yang X.A."/>
            <person name="Xu M."/>
            <person name="Zhou L."/>
            <person name="Fan Z."/>
            <person name="Jiang T."/>
        </authorList>
    </citation>
    <scope>X-RAY CRYSTALLOGRAPHY (2.45 ANGSTROMS) OF 35-190 OF OXIDIZED AND NON-OXIDIZED WILD-TYPE AND MUTANT SER-110</scope>
    <scope>SUBUNIT</scope>
    <scope>DISULFIDE BONDS</scope>
    <scope>MUTAGENESIS OF ARG-98 AND CYS-110</scope>
</reference>
<reference evidence="16 17" key="5">
    <citation type="journal article" date="2015" name="Sci. Rep.">
        <title>Structural insights into YfiR sequestering by YfiB in Pseudomonas aeruginosa PAO1.</title>
        <authorList>
            <person name="Li S."/>
            <person name="Li T."/>
            <person name="Xu Y."/>
            <person name="Zhang Q."/>
            <person name="Zhang W."/>
            <person name="Che S."/>
            <person name="Liu R."/>
            <person name="Wang Y."/>
            <person name="Bartlam M."/>
        </authorList>
    </citation>
    <scope>X-RAY CRYSTALLOGRAPHY (1.97 ANGSTROMS) OF YFIR ALONE AND IN COMPLEX WITH YFIB</scope>
    <scope>SUBUNIT</scope>
    <scope>INTERACTION WITH YFIB</scope>
    <scope>DISULFIDE BONDS</scope>
    <source>
        <strain>ATCC 15692 / DSM 22644 / CIP 104116 / JCM 14847 / LMG 12228 / 1C / PRS 101 / PAO1</strain>
    </source>
</reference>
<reference evidence="12" key="6">
    <citation type="submission" date="2015-01" db="PDB data bank">
        <title>Periplasmic repressor protein YfiR at 1.8 Angstroms resolution.</title>
        <authorList>
            <person name="Kauer S."/>
            <person name="Schirmer T."/>
        </authorList>
    </citation>
    <scope>X-RAY CRYSTALLOGRAPHY (1.80 ANGSTROMS) OF 36-190</scope>
    <scope>DISULFIDE BONDS</scope>
</reference>
<reference evidence="18 19 20" key="7">
    <citation type="journal article" date="2016" name="Protein Cell">
        <title>Structural insights into the regulatory mechanism of the Pseudomonas aeruginosa YfiBNR system.</title>
        <authorList>
            <person name="Xu M."/>
            <person name="Yang X."/>
            <person name="Yang X.A."/>
            <person name="Zhou L."/>
            <person name="Liu T.Z."/>
            <person name="Fan Z."/>
            <person name="Jiang T."/>
        </authorList>
    </citation>
    <scope>X-RAY CRYSTALLOGRAPHY (1.80 ANGSTROMS) OF 35-190 IN COMPLEX WITH MUTANT YFIB PRO-43 AND IN COMPLEXES WITH VITAMIN B6 AND L-TRP</scope>
    <scope>ACTIVITY REGULATION</scope>
    <scope>SUBUNIT</scope>
    <scope>INTERACTION WITH YFIB</scope>
    <scope>DISULFIDE BONDS</scope>
</reference>
<reference evidence="21 22" key="8">
    <citation type="journal article" date="2017" name="Biochem. Biophys. Res. Commun.">
        <title>Structural insights into the functional role of GMP in modulating the YfiBNR system.</title>
        <authorList>
            <person name="Zhou L."/>
            <person name="Xu M."/>
            <person name="Jiang T."/>
        </authorList>
    </citation>
    <scope>X-RAY CRYSTALLOGRAPHY (2.99 ANGSTROMS) OF 35-190 IN COMPLEXES WITH YFIB AND GMP</scope>
    <scope>ACTIVITY REGULATION</scope>
    <scope>INTERACTION WITH YFIB</scope>
    <scope>DISULFIDE BONDS</scope>
    <source>
        <strain>ATCC 15692 / DSM 22644 / CIP 104116 / JCM 14847 / LMG 12228 / 1C / PRS 101 / PAO1</strain>
    </source>
</reference>
<reference evidence="23" key="9">
    <citation type="journal article" date="2018" name="Biochem. Biophys. Res. Commun.">
        <title>Structural analysis of activating mutants of YfiB from Pseudomonas aeruginosa PAO1.</title>
        <authorList>
            <person name="Li S."/>
            <person name="Li T."/>
            <person name="Teng X."/>
            <person name="Lou X."/>
            <person name="Xu Y."/>
            <person name="Zhang Q."/>
            <person name="Bartlam M."/>
        </authorList>
    </citation>
    <scope>X-RAY CRYSTALLOGRAPHY (2.19 ANGSTROMS) IN COMPLEX WITH MUTANT YFIB PRO-43</scope>
    <scope>DISULFIDE BONDS</scope>
    <source>
        <strain>ATCC 15692 / DSM 22644 / CIP 104116 / JCM 14847 / LMG 12228 / 1C / PRS 101 / PAO1</strain>
    </source>
</reference>
<accession>Q9I4L4</accession>
<sequence length="190" mass="20681">MPSLPTLQPLDLYRRTLACLVLAVSCLGGGGLWADDARTSIEQRSNAVSQVLLGIFSYVRWPKEPAVLQLCVVGPTEYADGLLRGMVQANGRRVHAERRAVDNPDLGTLCNVIYLGVVDERERQQVFRSLAGHPVLSISERGTECSVGSMFCLNVGGPRITFEANLDSIARSGVRVHPSVLKLARRQATP</sequence>
<protein>
    <recommendedName>
        <fullName evidence="10">Negative regulator YfiR</fullName>
    </recommendedName>
</protein>